<protein>
    <recommendedName>
        <fullName>Thyroid hormone receptor alpha</fullName>
    </recommendedName>
    <alternativeName>
        <fullName>Nuclear receptor subfamily 1 group A member 1</fullName>
    </alternativeName>
    <alternativeName>
        <fullName>c-erbA-1</fullName>
    </alternativeName>
    <alternativeName>
        <fullName>c-erbA-alpha</fullName>
    </alternativeName>
</protein>
<proteinExistence type="evidence at protein level"/>
<reference key="1">
    <citation type="journal article" date="1988" name="Nature">
        <title>Thyroid hormone receptor alpha isoforms generated by alternative splicing differentially activate myosin HC gene transcription.</title>
        <authorList>
            <person name="Izumo S."/>
            <person name="Mahdavi V."/>
        </authorList>
    </citation>
    <scope>NUCLEOTIDE SEQUENCE [MRNA] (ISOFORMS ALPHA-1 AND ALPHA-2)</scope>
</reference>
<reference key="2">
    <citation type="journal article" date="1988" name="Nucleic Acids Res.">
        <title>Nucleotide sequence of novel cDNAs generated by alternative splicing of a rat thyroid hormone receptor gene transcript.</title>
        <authorList>
            <person name="Mitsuhashi T."/>
            <person name="Tennyson G."/>
            <person name="Nikodem V."/>
        </authorList>
    </citation>
    <scope>NUCLEOTIDE SEQUENCE [MRNA] (ISOFORM ALPHA-2)</scope>
</reference>
<reference key="3">
    <citation type="journal article" date="1988" name="Mol. Endocrinol.">
        <title>Identification of a rat c-erbA alpha-related protein which binds deoxyribonucleic acid but does not bind thyroid hormone.</title>
        <authorList>
            <person name="Lazar M.A."/>
            <person name="Hodin R.A."/>
            <person name="Darling D.S."/>
            <person name="Chin W.W."/>
        </authorList>
    </citation>
    <scope>NUCLEOTIDE SEQUENCE [MRNA] (ISOFORM ALPHA-2)</scope>
</reference>
<reference key="4">
    <citation type="journal article" date="1987" name="Science">
        <title>Identification of a novel thyroid hormone receptor expressed in the mammalian central nervous system.</title>
        <authorList>
            <person name="Thompson C.C."/>
            <person name="Weinberger C."/>
            <person name="Lebo R."/>
            <person name="Evans R.M."/>
        </authorList>
    </citation>
    <scope>NUCLEOTIDE SEQUENCE [MRNA] (ISOFORM ALPHA-1)</scope>
</reference>
<reference key="5">
    <citation type="submission" date="1988-08" db="EMBL/GenBank/DDBJ databases">
        <authorList>
            <person name="Flink I.L."/>
            <person name="Bailey T."/>
            <person name="Bahl J."/>
            <person name="Morkin E."/>
        </authorList>
    </citation>
    <scope>NUCLEOTIDE SEQUENCE [MRNA] OF 13-492 (ISOFORM ALPHA-1)</scope>
    <source>
        <tissue>Heart</tissue>
    </source>
</reference>
<reference key="6">
    <citation type="journal article" date="2000" name="Mol. Cell. Biol.">
        <title>A new family of nuclear receptor coregulators that integrates nuclear receptor signaling through CBP.</title>
        <authorList>
            <person name="Mahajan M.A."/>
            <person name="Samuels H.H."/>
        </authorList>
    </citation>
    <scope>INTERACTION WITH NCOA6</scope>
</reference>
<reference key="7">
    <citation type="journal article" date="1995" name="Nature">
        <title>A structural role for hormone in the thyroid hormone receptor.</title>
        <authorList>
            <person name="Wagner R.L."/>
            <person name="Apriletti J.W."/>
            <person name="McGrath M.E."/>
            <person name="West B.L."/>
            <person name="Baxter J.D."/>
            <person name="Fletterick R.J."/>
        </authorList>
    </citation>
    <scope>X-RAY CRYSTALLOGRAPHY (2.2 ANGSTROMS) OF 152-410 (ISOFORM ALPHA-1)</scope>
</reference>
<organism>
    <name type="scientific">Rattus norvegicus</name>
    <name type="common">Rat</name>
    <dbReference type="NCBI Taxonomy" id="10116"/>
    <lineage>
        <taxon>Eukaryota</taxon>
        <taxon>Metazoa</taxon>
        <taxon>Chordata</taxon>
        <taxon>Craniata</taxon>
        <taxon>Vertebrata</taxon>
        <taxon>Euteleostomi</taxon>
        <taxon>Mammalia</taxon>
        <taxon>Eutheria</taxon>
        <taxon>Euarchontoglires</taxon>
        <taxon>Glires</taxon>
        <taxon>Rodentia</taxon>
        <taxon>Myomorpha</taxon>
        <taxon>Muroidea</taxon>
        <taxon>Muridae</taxon>
        <taxon>Murinae</taxon>
        <taxon>Rattus</taxon>
    </lineage>
</organism>
<evidence type="ECO:0000250" key="1"/>
<evidence type="ECO:0000250" key="2">
    <source>
        <dbReference type="UniProtKB" id="P10827"/>
    </source>
</evidence>
<evidence type="ECO:0000250" key="3">
    <source>
        <dbReference type="UniProtKB" id="P10828"/>
    </source>
</evidence>
<evidence type="ECO:0000250" key="4">
    <source>
        <dbReference type="UniProtKB" id="P63058"/>
    </source>
</evidence>
<evidence type="ECO:0000255" key="5">
    <source>
        <dbReference type="PROSITE-ProRule" id="PRU00407"/>
    </source>
</evidence>
<evidence type="ECO:0000255" key="6">
    <source>
        <dbReference type="PROSITE-ProRule" id="PRU01189"/>
    </source>
</evidence>
<evidence type="ECO:0000256" key="7">
    <source>
        <dbReference type="SAM" id="MobiDB-lite"/>
    </source>
</evidence>
<evidence type="ECO:0000303" key="8">
    <source>
    </source>
</evidence>
<evidence type="ECO:0000303" key="9">
    <source>
    </source>
</evidence>
<evidence type="ECO:0000303" key="10">
    <source ref="5"/>
</evidence>
<evidence type="ECO:0000305" key="11"/>
<sequence length="492" mass="55072">MEQKPSKVECGSDPEENSARSPDGKRKRKNGQCPLKSSMSGYIPSYLDKDEQCVVCGDKATGYHYRCITCEGCKGFFRRTIQKNLHPTYSCKYDSCCVIDKITRNQCQLCRFKKCIAVGMAMDLVLDDSKRVAKRKLIEQNRERRRKEEMIRSLQQRPEPTPEEWDLIHVATEAHRSTNAQGSHWKQRRKFLPDDIGQSPIVSMPDGDKVDLEAFSEFTKIITPAITRVVDFAKKLPMFSELPCEDQIILLKGCCMEIMSLRAAVRYDPESDTLTLSGEMAVKREQLKNGGLGVVSDAIFELGKSLSAFNLDDTEVALLQAVLLMSTDRSGLLCVDKIEKSQEAYLLAFEHYVNHRKHNIPHFWPKLLMKEREVQSSILYKGAAAEGRPGGSLGVHPEGQQLLGMHVVQGPQVRQLEQQFGEAGSLRGPVLQHQSPKSPQQRLLELLHRSGILHSRAVCGEDDSSEASSLSSSSSDEDTEVFEDLAGKAASP</sequence>
<comment type="function">
    <text>Nuclear hormone receptor that can act as a repressor or activator of transcription. High affinity receptor for thyroid hormones, including triiodothyronine and thyroxine.</text>
</comment>
<comment type="subunit">
    <text evidence="1 2">Binds DNA as a dimer; homodimer and heterodimer with RXRB. Interacts with NCOA3 and NCOA6 coactivators, leading to a strong increase of transcription of target genes. Probably interacts with SFPQ. Interacts with C1D. Interacts with AKAP13. Interacts with TP53INP2. Interacts with PER2 (By similarity). Isoform alpha-2 and isoform alpha-1 interact with TACC1, but the interaction with alpha-1 is weaker. The interaction with isoform alpha-1, but not alpha-2, is decreased in the presence of thyroid hormone T3 (By similarity).</text>
</comment>
<comment type="interaction">
    <interactant intactId="EBI-21350183">
        <id>P63059-1</id>
    </interactant>
    <interactant intactId="EBI-21986506">
        <id>O75410-10</id>
        <label>TACC1</label>
    </interactant>
    <organismsDiffer>true</organismsDiffer>
    <experiments>2</experiments>
</comment>
<comment type="interaction">
    <interactant intactId="EBI-21987107">
        <id>P63059-2</id>
    </interactant>
    <interactant intactId="EBI-21986506">
        <id>O75410-10</id>
        <label>TACC1</label>
    </interactant>
    <organismsDiffer>true</organismsDiffer>
    <experiments>2</experiments>
</comment>
<comment type="subcellular location">
    <subcellularLocation>
        <location>Nucleus</location>
    </subcellularLocation>
</comment>
<comment type="subcellular location">
    <molecule>Isoform Alpha-2</molecule>
    <subcellularLocation>
        <location evidence="4">Cytoplasm</location>
    </subcellularLocation>
    <subcellularLocation>
        <location evidence="4">Nucleus</location>
    </subcellularLocation>
    <text evidence="4">When overexpressed found in the cytoplasm where it colocalizes with TACC1.</text>
</comment>
<comment type="alternative products">
    <event type="alternative splicing"/>
    <isoform>
        <id>P63059-1</id>
        <id>P15827-1</id>
        <name>Alpha-2</name>
        <sequence type="displayed"/>
    </isoform>
    <isoform>
        <id>P63059-2</id>
        <id>P15827-2</id>
        <name>Alpha-1</name>
        <sequence type="described" ref="VSP_011550"/>
    </isoform>
</comment>
<comment type="domain">
    <text>Composed of three domains: a modulating N-terminal domain, a DNA-binding domain and a C-terminal ligand-binding domain.</text>
</comment>
<comment type="miscellaneous">
    <molecule>Isoform Alpha-2</molecule>
    <text evidence="11">Does not bind thyroid hormone T3.</text>
</comment>
<comment type="similarity">
    <text evidence="11">Belongs to the nuclear hormone receptor family. NR1 subfamily.</text>
</comment>
<feature type="chain" id="PRO_0000053427" description="Thyroid hormone receptor alpha">
    <location>
        <begin position="1"/>
        <end position="492"/>
    </location>
</feature>
<feature type="domain" description="NR LBD" evidence="6">
    <location>
        <begin position="163"/>
        <end position="407"/>
    </location>
</feature>
<feature type="DNA-binding region" description="Nuclear receptor" evidence="5">
    <location>
        <begin position="53"/>
        <end position="127"/>
    </location>
</feature>
<feature type="zinc finger region" description="NR C4-type" evidence="5">
    <location>
        <begin position="53"/>
        <end position="73"/>
    </location>
</feature>
<feature type="zinc finger region" description="NR C4-type" evidence="5">
    <location>
        <begin position="91"/>
        <end position="115"/>
    </location>
</feature>
<feature type="region of interest" description="Modulating">
    <location>
        <begin position="1"/>
        <end position="52"/>
    </location>
</feature>
<feature type="region of interest" description="Disordered" evidence="7">
    <location>
        <begin position="1"/>
        <end position="33"/>
    </location>
</feature>
<feature type="region of interest" description="Disordered" evidence="7">
    <location>
        <begin position="457"/>
        <end position="492"/>
    </location>
</feature>
<feature type="binding site" evidence="3">
    <location>
        <position position="53"/>
    </location>
    <ligand>
        <name>Zn(2+)</name>
        <dbReference type="ChEBI" id="CHEBI:29105"/>
        <label>1</label>
    </ligand>
</feature>
<feature type="binding site" evidence="3">
    <location>
        <position position="56"/>
    </location>
    <ligand>
        <name>Zn(2+)</name>
        <dbReference type="ChEBI" id="CHEBI:29105"/>
        <label>1</label>
    </ligand>
</feature>
<feature type="binding site" evidence="3">
    <location>
        <position position="70"/>
    </location>
    <ligand>
        <name>Zn(2+)</name>
        <dbReference type="ChEBI" id="CHEBI:29105"/>
        <label>1</label>
    </ligand>
</feature>
<feature type="binding site" evidence="3">
    <location>
        <position position="73"/>
    </location>
    <ligand>
        <name>Zn(2+)</name>
        <dbReference type="ChEBI" id="CHEBI:29105"/>
        <label>1</label>
    </ligand>
</feature>
<feature type="binding site" evidence="3">
    <location>
        <position position="91"/>
    </location>
    <ligand>
        <name>Zn(2+)</name>
        <dbReference type="ChEBI" id="CHEBI:29105"/>
        <label>2</label>
    </ligand>
</feature>
<feature type="binding site" evidence="3">
    <location>
        <position position="97"/>
    </location>
    <ligand>
        <name>Zn(2+)</name>
        <dbReference type="ChEBI" id="CHEBI:29105"/>
        <label>2</label>
    </ligand>
</feature>
<feature type="binding site" evidence="3">
    <location>
        <position position="107"/>
    </location>
    <ligand>
        <name>Zn(2+)</name>
        <dbReference type="ChEBI" id="CHEBI:29105"/>
        <label>2</label>
    </ligand>
</feature>
<feature type="binding site" evidence="3">
    <location>
        <position position="110"/>
    </location>
    <ligand>
        <name>Zn(2+)</name>
        <dbReference type="ChEBI" id="CHEBI:29105"/>
        <label>2</label>
    </ligand>
</feature>
<feature type="binding site" evidence="2">
    <location>
        <position position="228"/>
    </location>
    <ligand>
        <name>3,3',5-triiodo-L-thyronine</name>
        <dbReference type="ChEBI" id="CHEBI:533015"/>
    </ligand>
</feature>
<feature type="binding site" evidence="2">
    <location>
        <position position="277"/>
    </location>
    <ligand>
        <name>3,3',5-triiodo-L-thyronine</name>
        <dbReference type="ChEBI" id="CHEBI:533015"/>
    </ligand>
</feature>
<feature type="splice variant" id="VSP_011550" description="In isoform Alpha-1." evidence="8 9 10">
    <original>EREVQSSILYKGAAAEGRPGGSLGVHPEGQQLLGMHVVQGPQVRQLEQQFGEAGSLRGPVLQHQSPKSPQQRLLELLHRSGILHSRAVCGEDDSSEASSLSSSSSDEDTEVFEDLAGKAASP</original>
    <variation>VTDLRMIGACHASRFLHMKVECPTELFPPLFLEVFEDQEV</variation>
    <location>
        <begin position="371"/>
        <end position="492"/>
    </location>
</feature>
<feature type="sequence conflict" description="In Ref. 3; AAA41121." evidence="11" ref="3">
    <original>G</original>
    <variation>C</variation>
    <location>
        <position position="72"/>
    </location>
</feature>
<feature type="sequence conflict" description="In Ref. 4; AAA42238." evidence="11" ref="4">
    <original>A</original>
    <variation>T</variation>
    <location>
        <position position="281"/>
    </location>
</feature>
<feature type="sequence conflict" description="In Ref. 1 and 4; AAA42238." evidence="11" ref="1 4">
    <original>E</original>
    <variation>K</variation>
    <location>
        <position position="285"/>
    </location>
</feature>
<feature type="sequence conflict" description="In Ref. 3; AAA41121/AAA41122." evidence="11" ref="3">
    <original>F</original>
    <variation>C</variation>
    <location>
        <position position="482"/>
    </location>
</feature>
<keyword id="KW-0025">Alternative splicing</keyword>
<keyword id="KW-0963">Cytoplasm</keyword>
<keyword id="KW-0238">DNA-binding</keyword>
<keyword id="KW-0479">Metal-binding</keyword>
<keyword id="KW-0539">Nucleus</keyword>
<keyword id="KW-0675">Receptor</keyword>
<keyword id="KW-1185">Reference proteome</keyword>
<keyword id="KW-0804">Transcription</keyword>
<keyword id="KW-0805">Transcription regulation</keyword>
<keyword id="KW-0862">Zinc</keyword>
<keyword id="KW-0863">Zinc-finger</keyword>
<accession>P63059</accession>
<accession>P10685</accession>
<accession>P15827</accession>
<accession>P16416</accession>
<accession>P37241</accession>
<accession>Q63107</accession>
<accession>Q63195</accession>
<accession>Q63196</accession>
<accession>Q99146</accession>
<name>THA_RAT</name>
<dbReference type="EMBL" id="M31174">
    <property type="protein sequence ID" value="AAA41121.1"/>
    <property type="molecule type" value="mRNA"/>
</dbReference>
<dbReference type="EMBL" id="M31177">
    <property type="protein sequence ID" value="AAA41122.1"/>
    <property type="molecule type" value="mRNA"/>
</dbReference>
<dbReference type="EMBL" id="M18028">
    <property type="protein sequence ID" value="AAA42238.1"/>
    <property type="molecule type" value="mRNA"/>
</dbReference>
<dbReference type="EMBL" id="X12744">
    <property type="protein sequence ID" value="CAA31237.1"/>
    <property type="molecule type" value="mRNA"/>
</dbReference>
<dbReference type="PIR" id="A36752">
    <property type="entry name" value="TVRTAR"/>
</dbReference>
<dbReference type="PIR" id="I57696">
    <property type="entry name" value="I57696"/>
</dbReference>
<dbReference type="PIR" id="I67429">
    <property type="entry name" value="I67429"/>
</dbReference>
<dbReference type="PIR" id="S06410">
    <property type="entry name" value="S06410"/>
</dbReference>
<dbReference type="PIR" id="S06907">
    <property type="entry name" value="S06907"/>
</dbReference>
<dbReference type="PIR" id="S09178">
    <property type="entry name" value="S09178"/>
</dbReference>
<dbReference type="RefSeq" id="NP_001017960.1">
    <molecule id="P63059-2"/>
    <property type="nucleotide sequence ID" value="NM_001017960.2"/>
</dbReference>
<dbReference type="RefSeq" id="NP_112396.2">
    <property type="nucleotide sequence ID" value="NM_031134.2"/>
</dbReference>
<dbReference type="SMR" id="P63059"/>
<dbReference type="BioGRID" id="249670">
    <property type="interactions" value="3"/>
</dbReference>
<dbReference type="CORUM" id="P63059"/>
<dbReference type="FunCoup" id="P63059">
    <property type="interactions" value="1794"/>
</dbReference>
<dbReference type="IntAct" id="P63059">
    <property type="interactions" value="1"/>
</dbReference>
<dbReference type="STRING" id="10116.ENSRNOP00000012340"/>
<dbReference type="BindingDB" id="P63059"/>
<dbReference type="ChEMBL" id="CHEMBL4823"/>
<dbReference type="GlyGen" id="P63059">
    <property type="glycosylation" value="1 site"/>
</dbReference>
<dbReference type="iPTMnet" id="P63059"/>
<dbReference type="PhosphoSitePlus" id="P63059"/>
<dbReference type="PaxDb" id="10116-ENSRNOP00000012340"/>
<dbReference type="ABCD" id="P63059">
    <property type="antibodies" value="1 sequenced antibody"/>
</dbReference>
<dbReference type="Ensembl" id="ENSRNOT00000087346.2">
    <molecule id="P63059-2"/>
    <property type="protein sequence ID" value="ENSRNOP00000072739.1"/>
    <property type="gene ID" value="ENSRNOG00000009066.7"/>
</dbReference>
<dbReference type="GeneID" id="81812"/>
<dbReference type="KEGG" id="rno:81812"/>
<dbReference type="AGR" id="RGD:3857"/>
<dbReference type="CTD" id="7067"/>
<dbReference type="RGD" id="3857">
    <property type="gene designation" value="Thra"/>
</dbReference>
<dbReference type="VEuPathDB" id="HostDB:ENSRNOG00000009066"/>
<dbReference type="eggNOG" id="KOG3575">
    <property type="taxonomic scope" value="Eukaryota"/>
</dbReference>
<dbReference type="GeneTree" id="ENSGT00940000157917"/>
<dbReference type="InParanoid" id="P63059"/>
<dbReference type="OMA" id="IMCLRIA"/>
<dbReference type="OrthoDB" id="4757at9989"/>
<dbReference type="PhylomeDB" id="P63059"/>
<dbReference type="Reactome" id="R-RNO-383280">
    <property type="pathway name" value="Nuclear Receptor transcription pathway"/>
</dbReference>
<dbReference type="Reactome" id="R-RNO-4090294">
    <property type="pathway name" value="SUMOylation of intracellular receptors"/>
</dbReference>
<dbReference type="PRO" id="PR:P63059"/>
<dbReference type="Proteomes" id="UP000002494">
    <property type="component" value="Chromosome 10"/>
</dbReference>
<dbReference type="Bgee" id="ENSRNOG00000009066">
    <property type="expression patterns" value="Expressed in frontal cortex and 20 other cell types or tissues"/>
</dbReference>
<dbReference type="ExpressionAtlas" id="P63059">
    <property type="expression patterns" value="baseline and differential"/>
</dbReference>
<dbReference type="GO" id="GO:0005829">
    <property type="term" value="C:cytosol"/>
    <property type="evidence" value="ECO:0000266"/>
    <property type="project" value="RGD"/>
</dbReference>
<dbReference type="GO" id="GO:0005634">
    <property type="term" value="C:nucleus"/>
    <property type="evidence" value="ECO:0000266"/>
    <property type="project" value="RGD"/>
</dbReference>
<dbReference type="GO" id="GO:0090575">
    <property type="term" value="C:RNA polymerase II transcription regulator complex"/>
    <property type="evidence" value="ECO:0000318"/>
    <property type="project" value="GO_Central"/>
</dbReference>
<dbReference type="GO" id="GO:0031490">
    <property type="term" value="F:chromatin DNA binding"/>
    <property type="evidence" value="ECO:0000266"/>
    <property type="project" value="RGD"/>
</dbReference>
<dbReference type="GO" id="GO:0003700">
    <property type="term" value="F:DNA-binding transcription factor activity"/>
    <property type="evidence" value="ECO:0000266"/>
    <property type="project" value="RGD"/>
</dbReference>
<dbReference type="GO" id="GO:0000981">
    <property type="term" value="F:DNA-binding transcription factor activity, RNA polymerase II-specific"/>
    <property type="evidence" value="ECO:0000314"/>
    <property type="project" value="RGD"/>
</dbReference>
<dbReference type="GO" id="GO:0140296">
    <property type="term" value="F:general transcription initiation factor binding"/>
    <property type="evidence" value="ECO:0000266"/>
    <property type="project" value="RGD"/>
</dbReference>
<dbReference type="GO" id="GO:0001161">
    <property type="term" value="F:intronic transcription regulatory region sequence-specific DNA binding"/>
    <property type="evidence" value="ECO:0000314"/>
    <property type="project" value="RGD"/>
</dbReference>
<dbReference type="GO" id="GO:0004879">
    <property type="term" value="F:nuclear receptor activity"/>
    <property type="evidence" value="ECO:0000250"/>
    <property type="project" value="UniProtKB"/>
</dbReference>
<dbReference type="GO" id="GO:0019904">
    <property type="term" value="F:protein domain specific binding"/>
    <property type="evidence" value="ECO:0000266"/>
    <property type="project" value="RGD"/>
</dbReference>
<dbReference type="GO" id="GO:0042803">
    <property type="term" value="F:protein homodimerization activity"/>
    <property type="evidence" value="ECO:0000314"/>
    <property type="project" value="RGD"/>
</dbReference>
<dbReference type="GO" id="GO:0044877">
    <property type="term" value="F:protein-containing complex binding"/>
    <property type="evidence" value="ECO:0000314"/>
    <property type="project" value="RGD"/>
</dbReference>
<dbReference type="GO" id="GO:0000978">
    <property type="term" value="F:RNA polymerase II cis-regulatory region sequence-specific DNA binding"/>
    <property type="evidence" value="ECO:0000318"/>
    <property type="project" value="GO_Central"/>
</dbReference>
<dbReference type="GO" id="GO:0043565">
    <property type="term" value="F:sequence-specific DNA binding"/>
    <property type="evidence" value="ECO:0000314"/>
    <property type="project" value="RGD"/>
</dbReference>
<dbReference type="GO" id="GO:0003727">
    <property type="term" value="F:single-stranded RNA binding"/>
    <property type="evidence" value="ECO:0000314"/>
    <property type="project" value="RGD"/>
</dbReference>
<dbReference type="GO" id="GO:0017025">
    <property type="term" value="F:TBP-class protein binding"/>
    <property type="evidence" value="ECO:0000266"/>
    <property type="project" value="RGD"/>
</dbReference>
<dbReference type="GO" id="GO:0070324">
    <property type="term" value="F:thyroid hormone binding"/>
    <property type="evidence" value="ECO:0000250"/>
    <property type="project" value="UniProtKB"/>
</dbReference>
<dbReference type="GO" id="GO:0000976">
    <property type="term" value="F:transcription cis-regulatory region binding"/>
    <property type="evidence" value="ECO:0000266"/>
    <property type="project" value="RGD"/>
</dbReference>
<dbReference type="GO" id="GO:0008270">
    <property type="term" value="F:zinc ion binding"/>
    <property type="evidence" value="ECO:0007669"/>
    <property type="project" value="UniProtKB-KW"/>
</dbReference>
<dbReference type="GO" id="GO:0030325">
    <property type="term" value="P:adrenal gland development"/>
    <property type="evidence" value="ECO:0000270"/>
    <property type="project" value="RGD"/>
</dbReference>
<dbReference type="GO" id="GO:0009887">
    <property type="term" value="P:animal organ morphogenesis"/>
    <property type="evidence" value="ECO:0000266"/>
    <property type="project" value="RGD"/>
</dbReference>
<dbReference type="GO" id="GO:0001502">
    <property type="term" value="P:cartilage condensation"/>
    <property type="evidence" value="ECO:0000266"/>
    <property type="project" value="RGD"/>
</dbReference>
<dbReference type="GO" id="GO:0030154">
    <property type="term" value="P:cell differentiation"/>
    <property type="evidence" value="ECO:0000318"/>
    <property type="project" value="GO_Central"/>
</dbReference>
<dbReference type="GO" id="GO:0048565">
    <property type="term" value="P:digestive tract development"/>
    <property type="evidence" value="ECO:0000270"/>
    <property type="project" value="RGD"/>
</dbReference>
<dbReference type="GO" id="GO:0048568">
    <property type="term" value="P:embryonic organ development"/>
    <property type="evidence" value="ECO:0000270"/>
    <property type="project" value="RGD"/>
</dbReference>
<dbReference type="GO" id="GO:0030218">
    <property type="term" value="P:erythrocyte differentiation"/>
    <property type="evidence" value="ECO:0000266"/>
    <property type="project" value="RGD"/>
</dbReference>
<dbReference type="GO" id="GO:0008050">
    <property type="term" value="P:female courtship behavior"/>
    <property type="evidence" value="ECO:0000266"/>
    <property type="project" value="RGD"/>
</dbReference>
<dbReference type="GO" id="GO:0009755">
    <property type="term" value="P:hormone-mediated signaling pathway"/>
    <property type="evidence" value="ECO:0000266"/>
    <property type="project" value="RGD"/>
</dbReference>
<dbReference type="GO" id="GO:0001822">
    <property type="term" value="P:kidney development"/>
    <property type="evidence" value="ECO:0000270"/>
    <property type="project" value="RGD"/>
</dbReference>
<dbReference type="GO" id="GO:0007611">
    <property type="term" value="P:learning or memory"/>
    <property type="evidence" value="ECO:0000266"/>
    <property type="project" value="RGD"/>
</dbReference>
<dbReference type="GO" id="GO:0001889">
    <property type="term" value="P:liver development"/>
    <property type="evidence" value="ECO:0000270"/>
    <property type="project" value="RGD"/>
</dbReference>
<dbReference type="GO" id="GO:0030324">
    <property type="term" value="P:lung development"/>
    <property type="evidence" value="ECO:0000270"/>
    <property type="project" value="RGD"/>
</dbReference>
<dbReference type="GO" id="GO:0045892">
    <property type="term" value="P:negative regulation of DNA-templated transcription"/>
    <property type="evidence" value="ECO:0000266"/>
    <property type="project" value="RGD"/>
</dbReference>
<dbReference type="GO" id="GO:2000143">
    <property type="term" value="P:negative regulation of DNA-templated transcription initiation"/>
    <property type="evidence" value="ECO:0000266"/>
    <property type="project" value="RGD"/>
</dbReference>
<dbReference type="GO" id="GO:0017055">
    <property type="term" value="P:negative regulation of RNA polymerase II transcription preinitiation complex assembly"/>
    <property type="evidence" value="ECO:0000266"/>
    <property type="project" value="RGD"/>
</dbReference>
<dbReference type="GO" id="GO:0000122">
    <property type="term" value="P:negative regulation of transcription by RNA polymerase II"/>
    <property type="evidence" value="ECO:0000318"/>
    <property type="project" value="GO_Central"/>
</dbReference>
<dbReference type="GO" id="GO:0001503">
    <property type="term" value="P:ossification"/>
    <property type="evidence" value="ECO:0000266"/>
    <property type="project" value="RGD"/>
</dbReference>
<dbReference type="GO" id="GO:0120162">
    <property type="term" value="P:positive regulation of cold-induced thermogenesis"/>
    <property type="evidence" value="ECO:0000250"/>
    <property type="project" value="YuBioLab"/>
</dbReference>
<dbReference type="GO" id="GO:0045925">
    <property type="term" value="P:positive regulation of female receptivity"/>
    <property type="evidence" value="ECO:0000266"/>
    <property type="project" value="RGD"/>
</dbReference>
<dbReference type="GO" id="GO:0045944">
    <property type="term" value="P:positive regulation of transcription by RNA polymerase II"/>
    <property type="evidence" value="ECO:0000314"/>
    <property type="project" value="RGD"/>
</dbReference>
<dbReference type="GO" id="GO:0008016">
    <property type="term" value="P:regulation of heart contraction"/>
    <property type="evidence" value="ECO:0000266"/>
    <property type="project" value="RGD"/>
</dbReference>
<dbReference type="GO" id="GO:0050994">
    <property type="term" value="P:regulation of lipid catabolic process"/>
    <property type="evidence" value="ECO:0000266"/>
    <property type="project" value="RGD"/>
</dbReference>
<dbReference type="GO" id="GO:0033032">
    <property type="term" value="P:regulation of myeloid cell apoptotic process"/>
    <property type="evidence" value="ECO:0000266"/>
    <property type="project" value="RGD"/>
</dbReference>
<dbReference type="GO" id="GO:0002155">
    <property type="term" value="P:regulation of thyroid hormone receptor signaling pathway"/>
    <property type="evidence" value="ECO:0000266"/>
    <property type="project" value="RGD"/>
</dbReference>
<dbReference type="GO" id="GO:0006357">
    <property type="term" value="P:regulation of transcription by RNA polymerase II"/>
    <property type="evidence" value="ECO:0000266"/>
    <property type="project" value="RGD"/>
</dbReference>
<dbReference type="GO" id="GO:0009409">
    <property type="term" value="P:response to cold"/>
    <property type="evidence" value="ECO:0000266"/>
    <property type="project" value="RGD"/>
</dbReference>
<dbReference type="GO" id="GO:0031667">
    <property type="term" value="P:response to nutrient levels"/>
    <property type="evidence" value="ECO:0000270"/>
    <property type="project" value="RGD"/>
</dbReference>
<dbReference type="GO" id="GO:0009410">
    <property type="term" value="P:response to xenobiotic stimulus"/>
    <property type="evidence" value="ECO:0000270"/>
    <property type="project" value="RGD"/>
</dbReference>
<dbReference type="GO" id="GO:0048384">
    <property type="term" value="P:retinoic acid receptor signaling pathway"/>
    <property type="evidence" value="ECO:0000318"/>
    <property type="project" value="GO_Central"/>
</dbReference>
<dbReference type="GO" id="GO:0030878">
    <property type="term" value="P:thyroid gland development"/>
    <property type="evidence" value="ECO:0000266"/>
    <property type="project" value="RGD"/>
</dbReference>
<dbReference type="GO" id="GO:0002154">
    <property type="term" value="P:thyroid hormone receptor signaling pathway"/>
    <property type="evidence" value="ECO:0000318"/>
    <property type="project" value="GO_Central"/>
</dbReference>
<dbReference type="GO" id="GO:0006366">
    <property type="term" value="P:transcription by RNA polymerase II"/>
    <property type="evidence" value="ECO:0000266"/>
    <property type="project" value="RGD"/>
</dbReference>
<dbReference type="GO" id="GO:0060509">
    <property type="term" value="P:type I pneumocyte differentiation"/>
    <property type="evidence" value="ECO:0000266"/>
    <property type="project" value="RGD"/>
</dbReference>
<dbReference type="CDD" id="cd06961">
    <property type="entry name" value="NR_DBD_TR"/>
    <property type="match status" value="1"/>
</dbReference>
<dbReference type="CDD" id="cd06935">
    <property type="entry name" value="NR_LBD_TR"/>
    <property type="match status" value="1"/>
</dbReference>
<dbReference type="FunFam" id="1.10.565.10:FF:000006">
    <property type="entry name" value="Thyroid hormone receptor beta 2"/>
    <property type="match status" value="1"/>
</dbReference>
<dbReference type="FunFam" id="3.30.50.10:FF:000011">
    <property type="entry name" value="Thyroid hormone receptor beta isoform"/>
    <property type="match status" value="1"/>
</dbReference>
<dbReference type="Gene3D" id="3.30.50.10">
    <property type="entry name" value="Erythroid Transcription Factor GATA-1, subunit A"/>
    <property type="match status" value="1"/>
</dbReference>
<dbReference type="Gene3D" id="1.10.565.10">
    <property type="entry name" value="Retinoid X Receptor"/>
    <property type="match status" value="1"/>
</dbReference>
<dbReference type="InterPro" id="IPR035500">
    <property type="entry name" value="NHR-like_dom_sf"/>
</dbReference>
<dbReference type="InterPro" id="IPR000536">
    <property type="entry name" value="Nucl_hrmn_rcpt_lig-bd"/>
</dbReference>
<dbReference type="InterPro" id="IPR050234">
    <property type="entry name" value="Nuclear_hormone_rcpt_NR1"/>
</dbReference>
<dbReference type="InterPro" id="IPR001723">
    <property type="entry name" value="Nuclear_hrmn_rcpt"/>
</dbReference>
<dbReference type="InterPro" id="IPR001728">
    <property type="entry name" value="ThyrH_rcpt"/>
</dbReference>
<dbReference type="InterPro" id="IPR001628">
    <property type="entry name" value="Znf_hrmn_rcpt"/>
</dbReference>
<dbReference type="InterPro" id="IPR013088">
    <property type="entry name" value="Znf_NHR/GATA"/>
</dbReference>
<dbReference type="PANTHER" id="PTHR24082">
    <property type="entry name" value="NUCLEAR HORMONE RECEPTOR"/>
    <property type="match status" value="1"/>
</dbReference>
<dbReference type="PANTHER" id="PTHR24082:SF42">
    <property type="entry name" value="THYROID HORMONE RECEPTOR ALPHA"/>
    <property type="match status" value="1"/>
</dbReference>
<dbReference type="Pfam" id="PF00104">
    <property type="entry name" value="Hormone_recep"/>
    <property type="match status" value="1"/>
</dbReference>
<dbReference type="Pfam" id="PF00105">
    <property type="entry name" value="zf-C4"/>
    <property type="match status" value="1"/>
</dbReference>
<dbReference type="PRINTS" id="PR00398">
    <property type="entry name" value="STRDHORMONER"/>
</dbReference>
<dbReference type="PRINTS" id="PR00047">
    <property type="entry name" value="STROIDFINGER"/>
</dbReference>
<dbReference type="PRINTS" id="PR00546">
    <property type="entry name" value="THYROIDHORMR"/>
</dbReference>
<dbReference type="SMART" id="SM00430">
    <property type="entry name" value="HOLI"/>
    <property type="match status" value="1"/>
</dbReference>
<dbReference type="SMART" id="SM00399">
    <property type="entry name" value="ZnF_C4"/>
    <property type="match status" value="1"/>
</dbReference>
<dbReference type="SUPFAM" id="SSF57716">
    <property type="entry name" value="Glucocorticoid receptor-like (DNA-binding domain)"/>
    <property type="match status" value="1"/>
</dbReference>
<dbReference type="SUPFAM" id="SSF48508">
    <property type="entry name" value="Nuclear receptor ligand-binding domain"/>
    <property type="match status" value="1"/>
</dbReference>
<dbReference type="PROSITE" id="PS51843">
    <property type="entry name" value="NR_LBD"/>
    <property type="match status" value="1"/>
</dbReference>
<dbReference type="PROSITE" id="PS00031">
    <property type="entry name" value="NUCLEAR_REC_DBD_1"/>
    <property type="match status" value="1"/>
</dbReference>
<dbReference type="PROSITE" id="PS51030">
    <property type="entry name" value="NUCLEAR_REC_DBD_2"/>
    <property type="match status" value="1"/>
</dbReference>
<gene>
    <name type="primary">Thra</name>
    <name type="synonym">C-erba-alpha</name>
    <name type="synonym">Nr1a1</name>
</gene>